<dbReference type="EC" id="2.3.1.189" evidence="1"/>
<dbReference type="EMBL" id="CP000431">
    <property type="protein sequence ID" value="ABG96646.1"/>
    <property type="molecule type" value="Genomic_DNA"/>
</dbReference>
<dbReference type="RefSeq" id="WP_011597161.1">
    <property type="nucleotide sequence ID" value="NC_008268.1"/>
</dbReference>
<dbReference type="SMR" id="Q0S740"/>
<dbReference type="KEGG" id="rha:RHA1_ro04861"/>
<dbReference type="PATRIC" id="fig|101510.16.peg.4912"/>
<dbReference type="eggNOG" id="COG0454">
    <property type="taxonomic scope" value="Bacteria"/>
</dbReference>
<dbReference type="eggNOG" id="COG0456">
    <property type="taxonomic scope" value="Bacteria"/>
</dbReference>
<dbReference type="HOGENOM" id="CLU_068014_0_0_11"/>
<dbReference type="OrthoDB" id="3208058at2"/>
<dbReference type="Proteomes" id="UP000008710">
    <property type="component" value="Chromosome"/>
</dbReference>
<dbReference type="GO" id="GO:0035447">
    <property type="term" value="F:mycothiol synthase activity"/>
    <property type="evidence" value="ECO:0007669"/>
    <property type="project" value="UniProtKB-UniRule"/>
</dbReference>
<dbReference type="GO" id="GO:0008999">
    <property type="term" value="F:protein-N-terminal-alanine acetyltransferase activity"/>
    <property type="evidence" value="ECO:0007669"/>
    <property type="project" value="TreeGrafter"/>
</dbReference>
<dbReference type="GO" id="GO:0010125">
    <property type="term" value="P:mycothiol biosynthetic process"/>
    <property type="evidence" value="ECO:0007669"/>
    <property type="project" value="UniProtKB-UniRule"/>
</dbReference>
<dbReference type="CDD" id="cd04301">
    <property type="entry name" value="NAT_SF"/>
    <property type="match status" value="2"/>
</dbReference>
<dbReference type="Gene3D" id="3.40.630.30">
    <property type="match status" value="1"/>
</dbReference>
<dbReference type="HAMAP" id="MF_01698">
    <property type="entry name" value="MshD"/>
    <property type="match status" value="1"/>
</dbReference>
<dbReference type="InterPro" id="IPR016181">
    <property type="entry name" value="Acyl_CoA_acyltransferase"/>
</dbReference>
<dbReference type="InterPro" id="IPR000182">
    <property type="entry name" value="GNAT_dom"/>
</dbReference>
<dbReference type="InterPro" id="IPR050276">
    <property type="entry name" value="MshD_Acetyltransferase"/>
</dbReference>
<dbReference type="InterPro" id="IPR017813">
    <property type="entry name" value="Mycothiol_AcTrfase"/>
</dbReference>
<dbReference type="NCBIfam" id="TIGR03448">
    <property type="entry name" value="mycothiol_MshD"/>
    <property type="match status" value="1"/>
</dbReference>
<dbReference type="PANTHER" id="PTHR43617">
    <property type="entry name" value="L-AMINO ACID N-ACETYLTRANSFERASE"/>
    <property type="match status" value="1"/>
</dbReference>
<dbReference type="PANTHER" id="PTHR43617:SF31">
    <property type="entry name" value="MYCOTHIOL ACETYLTRANSFERASE"/>
    <property type="match status" value="1"/>
</dbReference>
<dbReference type="Pfam" id="PF00583">
    <property type="entry name" value="Acetyltransf_1"/>
    <property type="match status" value="2"/>
</dbReference>
<dbReference type="PIRSF" id="PIRSF021524">
    <property type="entry name" value="MSH_acetyltransferase"/>
    <property type="match status" value="1"/>
</dbReference>
<dbReference type="SUPFAM" id="SSF55729">
    <property type="entry name" value="Acyl-CoA N-acyltransferases (Nat)"/>
    <property type="match status" value="1"/>
</dbReference>
<dbReference type="PROSITE" id="PS51186">
    <property type="entry name" value="GNAT"/>
    <property type="match status" value="2"/>
</dbReference>
<evidence type="ECO:0000255" key="1">
    <source>
        <dbReference type="HAMAP-Rule" id="MF_01698"/>
    </source>
</evidence>
<protein>
    <recommendedName>
        <fullName evidence="1">Mycothiol acetyltransferase</fullName>
        <shortName evidence="1">MSH acetyltransferase</shortName>
        <ecNumber evidence="1">2.3.1.189</ecNumber>
    </recommendedName>
    <alternativeName>
        <fullName evidence="1">Mycothiol synthase</fullName>
    </alternativeName>
</protein>
<reference key="1">
    <citation type="journal article" date="2006" name="Proc. Natl. Acad. Sci. U.S.A.">
        <title>The complete genome of Rhodococcus sp. RHA1 provides insights into a catabolic powerhouse.</title>
        <authorList>
            <person name="McLeod M.P."/>
            <person name="Warren R.L."/>
            <person name="Hsiao W.W.L."/>
            <person name="Araki N."/>
            <person name="Myhre M."/>
            <person name="Fernandes C."/>
            <person name="Miyazawa D."/>
            <person name="Wong W."/>
            <person name="Lillquist A.L."/>
            <person name="Wang D."/>
            <person name="Dosanjh M."/>
            <person name="Hara H."/>
            <person name="Petrescu A."/>
            <person name="Morin R.D."/>
            <person name="Yang G."/>
            <person name="Stott J.M."/>
            <person name="Schein J.E."/>
            <person name="Shin H."/>
            <person name="Smailus D."/>
            <person name="Siddiqui A.S."/>
            <person name="Marra M.A."/>
            <person name="Jones S.J.M."/>
            <person name="Holt R."/>
            <person name="Brinkman F.S.L."/>
            <person name="Miyauchi K."/>
            <person name="Fukuda M."/>
            <person name="Davies J.E."/>
            <person name="Mohn W.W."/>
            <person name="Eltis L.D."/>
        </authorList>
    </citation>
    <scope>NUCLEOTIDE SEQUENCE [LARGE SCALE GENOMIC DNA]</scope>
    <source>
        <strain>RHA1</strain>
    </source>
</reference>
<proteinExistence type="inferred from homology"/>
<sequence length="305" mass="32797">MSASVQSWTDRLDGKQAADVSALLERATAADGTAPVSEQGVHAVSGAGSDGVRHLVETDADRIVGYAQLQPGRGDHPAMAELAVDPAARGRGIGGRLVAEVLSEGGPDARVWAHGNLPAAQAVAQRLGLIGARELLQLRRPLADAELPELVVPEDISLRVYRGVEDDPEVLRVNAAAFAWHPEQGSWTERELAERRAEAWFDPSGLFMAFAASDDQRLLGFHWTKVHPKQGDEPAIGEVYVVAIGPDAQGRGLGRLLTLAGLHYLRDRGLGAVLLYVEGDNESALHTYDRLGFERFHTDVAYARA</sequence>
<name>MSHD_RHOJR</name>
<organism>
    <name type="scientific">Rhodococcus jostii (strain RHA1)</name>
    <dbReference type="NCBI Taxonomy" id="101510"/>
    <lineage>
        <taxon>Bacteria</taxon>
        <taxon>Bacillati</taxon>
        <taxon>Actinomycetota</taxon>
        <taxon>Actinomycetes</taxon>
        <taxon>Mycobacteriales</taxon>
        <taxon>Nocardiaceae</taxon>
        <taxon>Rhodococcus</taxon>
    </lineage>
</organism>
<feature type="chain" id="PRO_0000400292" description="Mycothiol acetyltransferase">
    <location>
        <begin position="1"/>
        <end position="305"/>
    </location>
</feature>
<feature type="domain" description="N-acetyltransferase 1" evidence="1">
    <location>
        <begin position="10"/>
        <end position="153"/>
    </location>
</feature>
<feature type="domain" description="N-acetyltransferase 2" evidence="1">
    <location>
        <begin position="156"/>
        <end position="305"/>
    </location>
</feature>
<feature type="binding site" evidence="1">
    <location>
        <position position="38"/>
    </location>
    <ligand>
        <name>1D-myo-inositol 2-(L-cysteinylamino)-2-deoxy-alpha-D-glucopyranoside</name>
        <dbReference type="ChEBI" id="CHEBI:58887"/>
    </ligand>
</feature>
<feature type="binding site" evidence="1">
    <location>
        <begin position="82"/>
        <end position="84"/>
    </location>
    <ligand>
        <name>acetyl-CoA</name>
        <dbReference type="ChEBI" id="CHEBI:57288"/>
        <label>1</label>
    </ligand>
</feature>
<feature type="binding site" evidence="1">
    <location>
        <position position="183"/>
    </location>
    <ligand>
        <name>1D-myo-inositol 2-(L-cysteinylamino)-2-deoxy-alpha-D-glucopyranoside</name>
        <dbReference type="ChEBI" id="CHEBI:58887"/>
    </ligand>
</feature>
<feature type="binding site" evidence="1">
    <location>
        <position position="225"/>
    </location>
    <ligand>
        <name>1D-myo-inositol 2-(L-cysteinylamino)-2-deoxy-alpha-D-glucopyranoside</name>
        <dbReference type="ChEBI" id="CHEBI:58887"/>
    </ligand>
</feature>
<feature type="binding site" evidence="1">
    <location>
        <position position="238"/>
    </location>
    <ligand>
        <name>1D-myo-inositol 2-(L-cysteinylamino)-2-deoxy-alpha-D-glucopyranoside</name>
        <dbReference type="ChEBI" id="CHEBI:58887"/>
    </ligand>
</feature>
<feature type="binding site" evidence="1">
    <location>
        <begin position="242"/>
        <end position="244"/>
    </location>
    <ligand>
        <name>acetyl-CoA</name>
        <dbReference type="ChEBI" id="CHEBI:57288"/>
        <label>2</label>
    </ligand>
</feature>
<feature type="binding site" evidence="1">
    <location>
        <begin position="249"/>
        <end position="255"/>
    </location>
    <ligand>
        <name>acetyl-CoA</name>
        <dbReference type="ChEBI" id="CHEBI:57288"/>
        <label>2</label>
    </ligand>
</feature>
<feature type="binding site" evidence="1">
    <location>
        <position position="276"/>
    </location>
    <ligand>
        <name>1D-myo-inositol 2-(L-cysteinylamino)-2-deoxy-alpha-D-glucopyranoside</name>
        <dbReference type="ChEBI" id="CHEBI:58887"/>
    </ligand>
</feature>
<feature type="binding site" evidence="1">
    <location>
        <begin position="281"/>
        <end position="286"/>
    </location>
    <ligand>
        <name>acetyl-CoA</name>
        <dbReference type="ChEBI" id="CHEBI:57288"/>
        <label>2</label>
    </ligand>
</feature>
<comment type="function">
    <text evidence="1">Catalyzes the transfer of acetyl from acetyl-CoA to desacetylmycothiol (Cys-GlcN-Ins) to form mycothiol.</text>
</comment>
<comment type="catalytic activity">
    <reaction evidence="1">
        <text>1D-myo-inositol 2-(L-cysteinylamino)-2-deoxy-alpha-D-glucopyranoside + acetyl-CoA = mycothiol + CoA + H(+)</text>
        <dbReference type="Rhea" id="RHEA:26172"/>
        <dbReference type="ChEBI" id="CHEBI:15378"/>
        <dbReference type="ChEBI" id="CHEBI:16768"/>
        <dbReference type="ChEBI" id="CHEBI:57287"/>
        <dbReference type="ChEBI" id="CHEBI:57288"/>
        <dbReference type="ChEBI" id="CHEBI:58887"/>
        <dbReference type="EC" id="2.3.1.189"/>
    </reaction>
</comment>
<comment type="subunit">
    <text evidence="1">Monomer.</text>
</comment>
<comment type="similarity">
    <text evidence="1">Belongs to the acetyltransferase family. MshD subfamily.</text>
</comment>
<gene>
    <name evidence="1" type="primary">mshD</name>
    <name type="ordered locus">RHA1_ro04861</name>
</gene>
<keyword id="KW-0012">Acyltransferase</keyword>
<keyword id="KW-0677">Repeat</keyword>
<keyword id="KW-0808">Transferase</keyword>
<accession>Q0S740</accession>